<comment type="function">
    <text evidence="7 8 9 11 12 13 15 16 18">Plays a major role in organizing microtubules and spindle poles during mitosis and meiosis in one-cell stage embryos (PubMed:16971515). Required for default nucleus positioning in oocytes (PubMed:16971515).</text>
</comment>
<comment type="subunit">
    <text evidence="7">Interacts with tac-1 to form a heterodimer.</text>
</comment>
<comment type="interaction">
    <interactant intactId="EBI-320102">
        <id>G5EEM5</id>
    </interactant>
    <interactant intactId="EBI-320612">
        <id>G5ECG0</id>
        <label>tac-1</label>
    </interactant>
    <organismsDiffer>false</organismsDiffer>
    <experiments>13</experiments>
</comment>
<comment type="subcellular location">
    <subcellularLocation>
        <location evidence="4 5 7 12 18">Cytoplasm</location>
        <location evidence="4 5 7 12 18">Cytoskeleton</location>
        <location evidence="4 5 7 12 18">Spindle pole</location>
    </subcellularLocation>
    <subcellularLocation>
        <location evidence="4 5 7 11 12 18">Cytoplasm</location>
        <location evidence="4 5 7 11 12 18">Cytoskeleton</location>
        <location evidence="4 5 7 11 12 18">Microtubule organizing center</location>
        <location evidence="4 5 7 11 12 18">Centrosome</location>
    </subcellularLocation>
    <subcellularLocation>
        <location evidence="4 5 7 12 18">Cytoplasm</location>
    </subcellularLocation>
    <text>Cycles between cytoplasm and centrosome during mitosis in a cell cycle- dependent manner. Centrosomal recruitment requires tbg-1.</text>
</comment>
<comment type="developmental stage">
    <text evidence="12 14 15 18">Expressed maternally during oogenesis. Observed during mitotic cell cycle from interphase through to early anaphase.</text>
</comment>
<comment type="domain">
    <text evidence="20 21">The TOG (tumor overexpressed gene) domains are arranged in the N-terminal region with each domain composed of six (for the most part non-canonical) HEAT repeats and forming a oblong paddle-like structure. 3D-structure analysis shows the presence of additional HEAT repeats that are not detected by sequence-based prediction programs. Intra-HEAT loops are positioned along a face of the TOG domain and bind to a single alpha/beta-tubulin heterodimer. The TOG domains seem to be structurally and functionally polarized. Differential functions may range from microtubule (MT) lattice binding and/or free tubulin heterodimer binding to potentiating stable incorporation of tubulin into the MT lattice.</text>
</comment>
<comment type="disruption phenotype">
    <text evidence="6 7 8 9 10 11 12 13 15 16 17 18">Maternal-effect embryonic lethal with meiotic and mitotic spindle positioning defects in one-cell stage embryos. RNAi-mediated knockdown results in meiosis and mitosis defects in embryos whereby embryos have one or both polar bodies absent, more than one female pronucleus and display irregular female pronuclear migration, which leads to delayed association with the male pronucleus (PubMed:16971515). RNAi-mediated knockdown results in defective mitotic spindle positioning and rotation in which spindles are established in the posterior side of the embryo and on the wrong axis (PubMed:16971515). RNAi-mediated knockdown results in a decrease in length of astral microtubules in embryos, with fewer microtubules extending from their centrosomes during cold conditions (PubMed:16971515). RNAi-mediated knockdown in a let-711 heteroallelic s2587 and it150 mutant background results in inviable embryos which do not hatch, however the astral microtubule length, polar body, female pronuclear migration and mitotic spindle defects of the single zyg-9 RNAi mutant are partially suppressed (PubMed:16971515).</text>
</comment>
<comment type="similarity">
    <text evidence="1">Belongs to the TOG/XMAP215 family.</text>
</comment>
<gene>
    <name evidence="22 24" type="primary">zyg-9</name>
    <name evidence="24" type="ORF">F22B5.7</name>
</gene>
<feature type="chain" id="PRO_0000416050" description="Zygote defective protein 9">
    <location>
        <begin position="1"/>
        <end position="1415"/>
    </location>
</feature>
<feature type="repeat" description="HEAT 1" evidence="1">
    <location>
        <begin position="30"/>
        <end position="68"/>
    </location>
</feature>
<feature type="repeat" description="HEAT 2" evidence="1">
    <location>
        <begin position="95"/>
        <end position="132"/>
    </location>
</feature>
<feature type="repeat" description="HEAT 3" evidence="1">
    <location>
        <begin position="135"/>
        <end position="172"/>
    </location>
</feature>
<feature type="repeat" description="HEAT 4" evidence="2">
    <location>
        <begin position="179"/>
        <end position="217"/>
    </location>
</feature>
<feature type="repeat" description="HEAT 5" evidence="1">
    <location>
        <begin position="339"/>
        <end position="377"/>
    </location>
</feature>
<feature type="repeat" description="HEAT 6" evidence="1">
    <location>
        <begin position="381"/>
        <end position="418"/>
    </location>
</feature>
<feature type="repeat" description="HEAT 7" evidence="1">
    <location>
        <begin position="420"/>
        <end position="457"/>
    </location>
</feature>
<feature type="repeat" description="HEAT 8" evidence="2">
    <location>
        <begin position="464"/>
        <end position="502"/>
    </location>
</feature>
<feature type="repeat" description="HEAT 9" evidence="1">
    <location>
        <begin position="706"/>
        <end position="743"/>
    </location>
</feature>
<feature type="repeat" description="HEAT 10" evidence="1">
    <location>
        <begin position="764"/>
        <end position="801"/>
    </location>
</feature>
<feature type="repeat" description="HEAT 11" evidence="1">
    <location>
        <begin position="804"/>
        <end position="841"/>
    </location>
</feature>
<feature type="region of interest" description="TOG 1" evidence="21">
    <location>
        <begin position="1"/>
        <end position="250"/>
    </location>
</feature>
<feature type="region of interest" description="Disordered" evidence="3">
    <location>
        <begin position="243"/>
        <end position="278"/>
    </location>
</feature>
<feature type="region of interest" description="TOG 2" evidence="21">
    <location>
        <begin position="251"/>
        <end position="530"/>
    </location>
</feature>
<feature type="region of interest" description="Disordered" evidence="3">
    <location>
        <begin position="544"/>
        <end position="603"/>
    </location>
</feature>
<feature type="region of interest" description="TOG 3" evidence="21">
    <location>
        <begin position="602"/>
        <end position="867"/>
    </location>
</feature>
<feature type="region of interest" description="Disordered" evidence="3">
    <location>
        <begin position="867"/>
        <end position="914"/>
    </location>
</feature>
<feature type="coiled-coil region" evidence="1">
    <location>
        <begin position="21"/>
        <end position="48"/>
    </location>
</feature>
<feature type="compositionally biased region" description="Low complexity" evidence="3">
    <location>
        <begin position="255"/>
        <end position="276"/>
    </location>
</feature>
<feature type="compositionally biased region" description="Acidic residues" evidence="3">
    <location>
        <begin position="562"/>
        <end position="572"/>
    </location>
</feature>
<feature type="mutagenesis site" description="In or628; decrease in abundance at centromeres." evidence="12">
    <original>G</original>
    <variation>E</variation>
    <location>
        <position position="203"/>
    </location>
</feature>
<feature type="mutagenesis site" description="In or593; decrease in abundance at centromeres." evidence="12">
    <original>G</original>
    <variation>E</variation>
    <location>
        <position position="488"/>
    </location>
</feature>
<feature type="mutagenesis site" description="In or635; reduction in tac-1 binding." evidence="12">
    <original>I</original>
    <variation>K</variation>
    <location>
        <position position="862"/>
    </location>
</feature>
<feature type="mutagenesis site" description="In or643; decrease in abundance at centromeres and in the cytoplasm and reduction in tac-1 binding." evidence="12">
    <original>E</original>
    <variation>K</variation>
    <location>
        <position position="1317"/>
    </location>
</feature>
<feature type="helix" evidence="25">
    <location>
        <begin position="611"/>
        <end position="620"/>
    </location>
</feature>
<feature type="helix" evidence="25">
    <location>
        <begin position="634"/>
        <end position="645"/>
    </location>
</feature>
<feature type="helix" evidence="25">
    <location>
        <begin position="650"/>
        <end position="656"/>
    </location>
</feature>
<feature type="helix" evidence="25">
    <location>
        <begin position="661"/>
        <end position="677"/>
    </location>
</feature>
<feature type="helix" evidence="25">
    <location>
        <begin position="679"/>
        <end position="684"/>
    </location>
</feature>
<feature type="helix" evidence="25">
    <location>
        <begin position="686"/>
        <end position="696"/>
    </location>
</feature>
<feature type="helix" evidence="25">
    <location>
        <begin position="702"/>
        <end position="721"/>
    </location>
</feature>
<feature type="helix" evidence="25">
    <location>
        <begin position="728"/>
        <end position="740"/>
    </location>
</feature>
<feature type="helix" evidence="25">
    <location>
        <begin position="741"/>
        <end position="743"/>
    </location>
</feature>
<feature type="helix" evidence="25">
    <location>
        <begin position="747"/>
        <end position="764"/>
    </location>
</feature>
<feature type="helix" evidence="25">
    <location>
        <begin position="766"/>
        <end position="775"/>
    </location>
</feature>
<feature type="helix" evidence="25">
    <location>
        <begin position="776"/>
        <end position="778"/>
    </location>
</feature>
<feature type="helix" evidence="25">
    <location>
        <begin position="782"/>
        <end position="799"/>
    </location>
</feature>
<feature type="helix" evidence="25">
    <location>
        <begin position="802"/>
        <end position="807"/>
    </location>
</feature>
<feature type="helix" evidence="25">
    <location>
        <begin position="809"/>
        <end position="813"/>
    </location>
</feature>
<feature type="helix" evidence="25">
    <location>
        <begin position="814"/>
        <end position="818"/>
    </location>
</feature>
<feature type="helix" evidence="25">
    <location>
        <begin position="822"/>
        <end position="839"/>
    </location>
</feature>
<feature type="helix" evidence="25">
    <location>
        <begin position="842"/>
        <end position="847"/>
    </location>
</feature>
<feature type="helix" evidence="25">
    <location>
        <begin position="852"/>
        <end position="865"/>
    </location>
</feature>
<keyword id="KW-0002">3D-structure</keyword>
<keyword id="KW-0131">Cell cycle</keyword>
<keyword id="KW-0132">Cell division</keyword>
<keyword id="KW-0175">Coiled coil</keyword>
<keyword id="KW-0963">Cytoplasm</keyword>
<keyword id="KW-0206">Cytoskeleton</keyword>
<keyword id="KW-0469">Meiosis</keyword>
<keyword id="KW-0493">Microtubule</keyword>
<keyword id="KW-0498">Mitosis</keyword>
<keyword id="KW-1185">Reference proteome</keyword>
<keyword id="KW-0677">Repeat</keyword>
<evidence type="ECO:0000255" key="1"/>
<evidence type="ECO:0000255" key="2">
    <source>
        <dbReference type="PROSITE-ProRule" id="PRU00103"/>
    </source>
</evidence>
<evidence type="ECO:0000256" key="3">
    <source>
        <dbReference type="SAM" id="MobiDB-lite"/>
    </source>
</evidence>
<evidence type="ECO:0000269" key="4">
    <source>
    </source>
</evidence>
<evidence type="ECO:0000269" key="5">
    <source>
    </source>
</evidence>
<evidence type="ECO:0000269" key="6">
    <source>
    </source>
</evidence>
<evidence type="ECO:0000269" key="7">
    <source>
    </source>
</evidence>
<evidence type="ECO:0000269" key="8">
    <source>
    </source>
</evidence>
<evidence type="ECO:0000269" key="9">
    <source>
    </source>
</evidence>
<evidence type="ECO:0000269" key="10">
    <source>
    </source>
</evidence>
<evidence type="ECO:0000269" key="11">
    <source>
    </source>
</evidence>
<evidence type="ECO:0000269" key="12">
    <source>
    </source>
</evidence>
<evidence type="ECO:0000269" key="13">
    <source>
    </source>
</evidence>
<evidence type="ECO:0000269" key="14">
    <source>
    </source>
</evidence>
<evidence type="ECO:0000269" key="15">
    <source>
    </source>
</evidence>
<evidence type="ECO:0000269" key="16">
    <source>
    </source>
</evidence>
<evidence type="ECO:0000269" key="17">
    <source>
    </source>
</evidence>
<evidence type="ECO:0000269" key="18">
    <source>
    </source>
</evidence>
<evidence type="ECO:0000303" key="19">
    <source>
    </source>
</evidence>
<evidence type="ECO:0000305" key="20"/>
<evidence type="ECO:0000305" key="21">
    <source>
    </source>
</evidence>
<evidence type="ECO:0000312" key="22">
    <source>
        <dbReference type="EMBL" id="AAC17865.1"/>
    </source>
</evidence>
<evidence type="ECO:0000312" key="23">
    <source>
        <dbReference type="EMBL" id="CAA90359.1"/>
    </source>
</evidence>
<evidence type="ECO:0000312" key="24">
    <source>
        <dbReference type="WormBase" id="F22B5.7"/>
    </source>
</evidence>
<evidence type="ECO:0007829" key="25">
    <source>
        <dbReference type="PDB" id="2OF3"/>
    </source>
</evidence>
<name>ZYG9_CAEEL</name>
<sequence>MSNWDYLDEVDILPKLPPNFDELRESKKWQERKEALEALLKVLTDNERLSTKASYAELIGHLQMVLAKDANINCQALAAKCIGKFATGLRAKFSSFAGPLLPVIFEKMKEKKPMLREPLVDCSNEVGRTMQSLETGQEDILAALAKPNPQIKQQTALFVARQLDLVVPAKQPKGFIKAVVPVFGKLTGDADQDVREASLQGLGAVQRIIGDKNVKNLLGDASSDEGKMKKIGEYAEKSTASFAEEQAKNAPPVAPTSSTPSASAASGDPSGGTATAVVSSGAPVAEADPWDFLDAFDVLSKMPDGFDTNIESKKWQERKEALEGLLQLITANPKLDPKANYGALVERLQKVLEKDANINVAALAANCITGIANGLRTKFQPFAVSVTPIIFEKFKEKKPTLRDPLVACIDAVVATTNLEAVGEIVLAALGKPNPSIKTQTDLFLQRCFMKLNSQTMPKKTLKTLIPSLIKHSGDSDSEVREASYAAMGAMMRAIGEKPSLQLLADIASDNLKMSKIKEFHQKALDEAGPAEIAEMVKSIHKADAPPAAAPPKKTAPPKKQPEDEEVVEEEDEPLKPPPGDKKKKVPVKENEENEPPVVAPKAELLLSDNEDKKQRIKEEKQLKLVKWNFQAPTDEHISQLQTLLGNQAKVSLMSQLFHKDFKQHLAALDSLVRLADTSPRSLLSNSDLLLKWCTLRFFETNPAALIKVLELCKVIVELIRDTETPMSQEEVSAFVPYLLLKTGEAKDNMRTSVRDIVNVLSDVVGPLKMTPMLLDALKSKNARQRSECLLVIEYYITNAGISPLKSLSVEKTVAPFVGDKDVNVRNAAINVLVACFKFEGDQMWKAAGRMADKDKSLVEERIKRTGVKPGSGVVTSPPTGGPKILVPQQQGSVVRRPASRSRTREPEPEEVQSDTFTIRQDTMPPKTSSRYALRDDVFSSAMGRLDGTQVITPPQPVNGWSNNTFQMKRTNSSSSISSIDTSDQIQRSINNISSSLADVAQDAMFQVTYVLNQPEQRHLVDRRADLVFRASAAQLDLVIEEFNAGRDVSGTMDACTQMLFILMGGVETEHGLEPLNASPDTVKAIISSVLRCIIQIGNTESGYGMARSLNRLAMRLIYRVELSNLLCGLILAMTESLQMNTGITELVSKLSSKWCDELEKRRAQLRASDIVDSFNAFYVCALTELKMDISDSHILIVDNYLERVILQQGDVVLDAARRLSRPHMHLTSMINKILQMMRERKIDPIMPGTLEARMPQEDEAVVVRSGVQVSIDNILRDTSMAVKHIEQLNILIASSDRSWNEYMEYLKNNPMGELIKELVGECSRKKRIDFNLSHVVKSSMAVFKAMAATGPVQEEGRITPTDINRMDTMIVGTPLSRGDATITRARGNMIRPKRTTLSRDQMANIRHTLDRVKNH</sequence>
<dbReference type="EMBL" id="AF035197">
    <property type="protein sequence ID" value="AAC17865.1"/>
    <property type="molecule type" value="mRNA"/>
</dbReference>
<dbReference type="EMBL" id="Z50044">
    <property type="protein sequence ID" value="CAA90359.1"/>
    <property type="molecule type" value="Genomic_DNA"/>
</dbReference>
<dbReference type="PIR" id="T21244">
    <property type="entry name" value="T21244"/>
</dbReference>
<dbReference type="RefSeq" id="NP_495784.1">
    <property type="nucleotide sequence ID" value="NM_063383.7"/>
</dbReference>
<dbReference type="PDB" id="2OF3">
    <property type="method" value="X-ray"/>
    <property type="resolution" value="1.90 A"/>
    <property type="chains" value="A=602-867"/>
</dbReference>
<dbReference type="PDBsum" id="2OF3"/>
<dbReference type="SMR" id="G5EEM5"/>
<dbReference type="BioGRID" id="39679">
    <property type="interactions" value="52"/>
</dbReference>
<dbReference type="ComplexPortal" id="CPX-372">
    <property type="entry name" value="Zyg-9/Tac-1 complex"/>
</dbReference>
<dbReference type="FunCoup" id="G5EEM5">
    <property type="interactions" value="2565"/>
</dbReference>
<dbReference type="IntAct" id="G5EEM5">
    <property type="interactions" value="4"/>
</dbReference>
<dbReference type="STRING" id="6239.F22B5.7.1"/>
<dbReference type="PaxDb" id="6239-F22B5.7"/>
<dbReference type="PeptideAtlas" id="G5EEM5"/>
<dbReference type="EnsemblMetazoa" id="F22B5.7.1">
    <property type="protein sequence ID" value="F22B5.7.1"/>
    <property type="gene ID" value="WBGene00006994"/>
</dbReference>
<dbReference type="GeneID" id="174350"/>
<dbReference type="KEGG" id="cel:CELE_F22B5.7"/>
<dbReference type="AGR" id="WB:WBGene00006994"/>
<dbReference type="CTD" id="174350"/>
<dbReference type="WormBase" id="F22B5.7">
    <property type="protein sequence ID" value="CE20707"/>
    <property type="gene ID" value="WBGene00006994"/>
    <property type="gene designation" value="zyg-9"/>
</dbReference>
<dbReference type="eggNOG" id="KOG1820">
    <property type="taxonomic scope" value="Eukaryota"/>
</dbReference>
<dbReference type="HOGENOM" id="CLU_251066_0_0_1"/>
<dbReference type="InParanoid" id="G5EEM5"/>
<dbReference type="OMA" id="RDTETPM"/>
<dbReference type="OrthoDB" id="205662at2759"/>
<dbReference type="PhylomeDB" id="G5EEM5"/>
<dbReference type="CD-CODE" id="1E117272">
    <property type="entry name" value="Centrosome"/>
</dbReference>
<dbReference type="CD-CODE" id="73A75392">
    <property type="entry name" value="P-granule"/>
</dbReference>
<dbReference type="CD-CODE" id="E72E7219">
    <property type="entry name" value="Pericentriolar matrix"/>
</dbReference>
<dbReference type="EvolutionaryTrace" id="G5EEM5"/>
<dbReference type="PRO" id="PR:G5EEM5"/>
<dbReference type="Proteomes" id="UP000001940">
    <property type="component" value="Chromosome II"/>
</dbReference>
<dbReference type="Bgee" id="WBGene00006994">
    <property type="expression patterns" value="Expressed in germ line (C elegans) and 4 other cell types or tissues"/>
</dbReference>
<dbReference type="GO" id="GO:0005813">
    <property type="term" value="C:centrosome"/>
    <property type="evidence" value="ECO:0000314"/>
    <property type="project" value="UniProtKB"/>
</dbReference>
<dbReference type="GO" id="GO:0005737">
    <property type="term" value="C:cytoplasm"/>
    <property type="evidence" value="ECO:0000314"/>
    <property type="project" value="WormBase"/>
</dbReference>
<dbReference type="GO" id="GO:0000776">
    <property type="term" value="C:kinetochore"/>
    <property type="evidence" value="ECO:0000314"/>
    <property type="project" value="UniProtKB"/>
</dbReference>
<dbReference type="GO" id="GO:0072687">
    <property type="term" value="C:meiotic spindle"/>
    <property type="evidence" value="ECO:0000314"/>
    <property type="project" value="UniProtKB"/>
</dbReference>
<dbReference type="GO" id="GO:0061673">
    <property type="term" value="C:mitotic spindle astral microtubule"/>
    <property type="evidence" value="ECO:0000314"/>
    <property type="project" value="ComplexPortal"/>
</dbReference>
<dbReference type="GO" id="GO:1990498">
    <property type="term" value="C:mitotic spindle microtubule"/>
    <property type="evidence" value="ECO:0000314"/>
    <property type="project" value="ComplexPortal"/>
</dbReference>
<dbReference type="GO" id="GO:0000922">
    <property type="term" value="C:spindle pole"/>
    <property type="evidence" value="ECO:0000314"/>
    <property type="project" value="UniProtKB"/>
</dbReference>
<dbReference type="GO" id="GO:0008017">
    <property type="term" value="F:microtubule binding"/>
    <property type="evidence" value="ECO:0000250"/>
    <property type="project" value="WormBase"/>
</dbReference>
<dbReference type="GO" id="GO:0061863">
    <property type="term" value="F:microtubule plus end polymerase"/>
    <property type="evidence" value="ECO:0000318"/>
    <property type="project" value="GO_Central"/>
</dbReference>
<dbReference type="GO" id="GO:0051010">
    <property type="term" value="F:microtubule plus-end binding"/>
    <property type="evidence" value="ECO:0007669"/>
    <property type="project" value="InterPro"/>
</dbReference>
<dbReference type="GO" id="GO:0051301">
    <property type="term" value="P:cell division"/>
    <property type="evidence" value="ECO:0007669"/>
    <property type="project" value="UniProtKB-KW"/>
</dbReference>
<dbReference type="GO" id="GO:0051298">
    <property type="term" value="P:centrosome duplication"/>
    <property type="evidence" value="ECO:0000318"/>
    <property type="project" value="GO_Central"/>
</dbReference>
<dbReference type="GO" id="GO:0009792">
    <property type="term" value="P:embryo development ending in birth or egg hatching"/>
    <property type="evidence" value="ECO:0000315"/>
    <property type="project" value="WormBase"/>
</dbReference>
<dbReference type="GO" id="GO:0030951">
    <property type="term" value="P:establishment or maintenance of microtubule cytoskeleton polarity"/>
    <property type="evidence" value="ECO:0000318"/>
    <property type="project" value="GO_Central"/>
</dbReference>
<dbReference type="GO" id="GO:0000212">
    <property type="term" value="P:meiotic spindle organization"/>
    <property type="evidence" value="ECO:0000315"/>
    <property type="project" value="WormBase"/>
</dbReference>
<dbReference type="GO" id="GO:0046785">
    <property type="term" value="P:microtubule polymerization"/>
    <property type="evidence" value="ECO:0000318"/>
    <property type="project" value="GO_Central"/>
</dbReference>
<dbReference type="GO" id="GO:0007017">
    <property type="term" value="P:microtubule-based process"/>
    <property type="evidence" value="ECO:0000314"/>
    <property type="project" value="ComplexPortal"/>
</dbReference>
<dbReference type="GO" id="GO:0007052">
    <property type="term" value="P:mitotic spindle organization"/>
    <property type="evidence" value="ECO:0000318"/>
    <property type="project" value="GO_Central"/>
</dbReference>
<dbReference type="GO" id="GO:0051231">
    <property type="term" value="P:spindle elongation"/>
    <property type="evidence" value="ECO:0000315"/>
    <property type="project" value="UniProtKB"/>
</dbReference>
<dbReference type="GO" id="GO:0007051">
    <property type="term" value="P:spindle organization"/>
    <property type="evidence" value="ECO:0000315"/>
    <property type="project" value="UniProtKB"/>
</dbReference>
<dbReference type="FunFam" id="1.25.10.10:FF:000019">
    <property type="entry name" value="Cytoskeleton-associated protein 5"/>
    <property type="match status" value="2"/>
</dbReference>
<dbReference type="FunFam" id="1.25.10.10:FF:000050">
    <property type="entry name" value="Cytoskeleton-associated protein 5 isoform X1"/>
    <property type="match status" value="1"/>
</dbReference>
<dbReference type="Gene3D" id="1.25.10.10">
    <property type="entry name" value="Leucine-rich Repeat Variant"/>
    <property type="match status" value="3"/>
</dbReference>
<dbReference type="InterPro" id="IPR011989">
    <property type="entry name" value="ARM-like"/>
</dbReference>
<dbReference type="InterPro" id="IPR016024">
    <property type="entry name" value="ARM-type_fold"/>
</dbReference>
<dbReference type="InterPro" id="IPR021133">
    <property type="entry name" value="HEAT_type_2"/>
</dbReference>
<dbReference type="InterPro" id="IPR034085">
    <property type="entry name" value="TOG"/>
</dbReference>
<dbReference type="InterPro" id="IPR045110">
    <property type="entry name" value="XMAP215"/>
</dbReference>
<dbReference type="InterPro" id="IPR048491">
    <property type="entry name" value="XMAP215_CLASP_TOG"/>
</dbReference>
<dbReference type="PANTHER" id="PTHR12609">
    <property type="entry name" value="MICROTUBULE ASSOCIATED PROTEIN XMAP215"/>
    <property type="match status" value="1"/>
</dbReference>
<dbReference type="Pfam" id="PF21041">
    <property type="entry name" value="XMAP215_CLASP_TOG"/>
    <property type="match status" value="3"/>
</dbReference>
<dbReference type="SMART" id="SM01349">
    <property type="entry name" value="TOG"/>
    <property type="match status" value="3"/>
</dbReference>
<dbReference type="SUPFAM" id="SSF48371">
    <property type="entry name" value="ARM repeat"/>
    <property type="match status" value="1"/>
</dbReference>
<dbReference type="PROSITE" id="PS50077">
    <property type="entry name" value="HEAT_REPEAT"/>
    <property type="match status" value="2"/>
</dbReference>
<reference evidence="20" key="1">
    <citation type="journal article" date="1998" name="J. Cell Biol.">
        <title>ZYG-9, a Caenorhabditis elegans protein required for microtubule organization and function, is a component of meiotic and mitotic spindle poles.</title>
        <authorList>
            <person name="Matthews L.R."/>
            <person name="Carter P."/>
            <person name="Thierry-Mieg D."/>
            <person name="Kemphues K.J."/>
        </authorList>
    </citation>
    <scope>NUCLEOTIDE SEQUENCE [MRNA]</scope>
    <scope>FUNCTION</scope>
    <scope>SUBCELLULAR LOCATION</scope>
    <scope>DEVELOPMENTAL STAGE</scope>
    <scope>DISRUPTION PHENOTYPE</scope>
    <source>
        <strain>Bristol N2</strain>
    </source>
</reference>
<reference evidence="23" key="2">
    <citation type="journal article" date="1998" name="Science">
        <title>Genome sequence of the nematode C. elegans: a platform for investigating biology.</title>
        <authorList>
            <consortium name="The C. elegans sequencing consortium"/>
        </authorList>
    </citation>
    <scope>NUCLEOTIDE SEQUENCE [LARGE SCALE GENOMIC DNA]</scope>
    <source>
        <strain>Bristol N2</strain>
    </source>
</reference>
<reference evidence="20" key="3">
    <citation type="journal article" date="1980" name="Dev. Biol.">
        <title>Parental effects and phenotypic characterization of mutations that affect early development in Caenorhabditis elegans.</title>
        <authorList>
            <person name="Wood W.B."/>
            <person name="Hecht R."/>
            <person name="Carr S."/>
            <person name="Vanderslice R."/>
            <person name="Wolf N."/>
            <person name="Hirsh D."/>
        </authorList>
    </citation>
    <scope>DISRUPTION PHENOTYPE</scope>
    <source>
        <strain>Bristol N2</strain>
    </source>
</reference>
<reference evidence="20" key="4">
    <citation type="journal article" date="1983" name="Cell">
        <title>Generation of asymmetry and segregation of germ-line granules in early C. elegans embryos.</title>
        <authorList>
            <person name="Strome S."/>
            <person name="Wood W.B."/>
        </authorList>
    </citation>
    <scope>FUNCTION</scope>
    <scope>DISRUPTION PHENOTYPE</scope>
    <source>
        <strain>Bristol N2</strain>
    </source>
</reference>
<reference evidence="20" key="5">
    <citation type="journal article" date="1986" name="Dev. Biol.">
        <title>Two loci required for cytoplasmic organization in early embryos of Caenorhabditis elegans.</title>
        <authorList>
            <person name="Kemphues K.J."/>
            <person name="Wolf N."/>
            <person name="Wood W.B."/>
            <person name="Hirsh D."/>
        </authorList>
    </citation>
    <scope>FUNCTION</scope>
    <scope>DEVELOPMENTAL STAGE</scope>
    <scope>DISRUPTION PHENOTYPE</scope>
    <source>
        <strain>Bristol N2</strain>
    </source>
</reference>
<reference evidence="20" key="6">
    <citation type="journal article" date="1988" name="Genetics">
        <title>Maternal-effect lethal mutations on linkage group II of Caenorhabditis elegans.</title>
        <authorList>
            <person name="Kemphues K.J."/>
            <person name="Kusch M."/>
            <person name="Wolf N."/>
        </authorList>
    </citation>
    <scope>DEVELOPMENTAL STAGE</scope>
    <source>
        <strain>Bristol N2</strain>
    </source>
</reference>
<reference evidence="20" key="7">
    <citation type="journal article" date="1990" name="Genetics">
        <title>Mutations affecting the meiotic and mitotic divisions of the early Caenorhabditis elegans embryo.</title>
        <authorList>
            <person name="Mains P.E."/>
            <person name="Kemphues K.J."/>
            <person name="Sprunger S.A."/>
            <person name="Sulston I.A."/>
            <person name="Wood W.B."/>
        </authorList>
    </citation>
    <scope>FUNCTION</scope>
    <scope>DISRUPTION PHENOTYPE</scope>
    <source>
        <strain>Bristol N2</strain>
    </source>
</reference>
<reference evidence="20" key="8">
    <citation type="journal article" date="1992" name="Mech. Ageing Dev.">
        <title>Lifespan shortening of the nematode Caenorhabditis elegans under higher concentrations of oxygen.</title>
        <authorList>
            <person name="Honda S."/>
            <person name="Matsuo M."/>
        </authorList>
    </citation>
    <scope>DISRUPTION PHENOTYPE</scope>
    <source>
        <strain>Bristol N2</strain>
    </source>
</reference>
<reference evidence="20" key="9">
    <citation type="journal article" date="1999" name="J. Cell Biol.">
        <title>Dissection of cell division processes in the one cell stage Caenorhabditis elegans embryo by mutational analysis.</title>
        <authorList>
            <person name="Gonczy P."/>
            <person name="Schnabel H."/>
            <person name="Kaletta T."/>
            <person name="Amores A.D."/>
            <person name="Hyman T."/>
            <person name="Schnabel R."/>
        </authorList>
    </citation>
    <scope>SUBCELLULAR LOCATION</scope>
    <source>
        <strain>Bristol N2</strain>
    </source>
</reference>
<reference evidence="20" key="10">
    <citation type="journal article" date="2002" name="J. Cell Biol.">
        <title>The kinetically dominant assembly pathway for centrosomal asters in Caenorhabditis elegans is gamma-tubulin dependent.</title>
        <authorList>
            <person name="Hannak E."/>
            <person name="Oegema K."/>
            <person name="Kirkham M."/>
            <person name="Gonczy P."/>
            <person name="Habermann B."/>
            <person name="Hyman A.A."/>
        </authorList>
    </citation>
    <scope>SUBCELLULAR LOCATION</scope>
    <source>
        <strain>Bristol N2</strain>
    </source>
</reference>
<reference evidence="20" key="11">
    <citation type="journal article" date="2003" name="Curr. Biol.">
        <title>Caenorhabditis elegans TAC-1 and ZYG-9 form a complex that is essential for long astral and spindle microtubules.</title>
        <authorList>
            <person name="Srayko M."/>
            <person name="Quintin S."/>
            <person name="Schwager A."/>
            <person name="Hyman A.A."/>
        </authorList>
    </citation>
    <scope>FUNCTION</scope>
    <scope>HETERODIMER WITH TAC-1</scope>
    <scope>SUBCELLULAR LOCATION</scope>
    <scope>DISRUPTION PHENOTYPE</scope>
    <source>
        <strain>Bristol N2</strain>
    </source>
</reference>
<reference evidence="20" key="12">
    <citation type="journal article" date="2003" name="Dev. Biol.">
        <title>MEI-1/katanin is required for translocation of the meiosis I spindle to the oocyte cortex in C elegans.</title>
        <authorList>
            <person name="Yang H.-Y."/>
            <person name="McNally K."/>
            <person name="McNally F.J."/>
        </authorList>
    </citation>
    <scope>DISRUPTION PHENOTYPE</scope>
    <source>
        <strain>Bristol N2</strain>
    </source>
</reference>
<reference evidence="20" key="13">
    <citation type="journal article" date="2005" name="Dev. Cell">
        <title>Computer simulations and image processing reveal length-dependent pulling force as the primary mechanism for C. elegans male pronuclear migration.</title>
        <authorList>
            <person name="Kimura A."/>
            <person name="Onami S."/>
        </authorList>
    </citation>
    <scope>FUNCTION</scope>
    <scope>DISRUPTION PHENOTYPE</scope>
    <source>
        <strain>Bristol N2</strain>
    </source>
</reference>
<reference evidence="20" key="14">
    <citation type="journal article" date="2005" name="Dev. Cell">
        <title>Identification and characterization of factors required for microtubule growth and nucleation in the early C. elegans embryo.</title>
        <authorList>
            <person name="Srayko M."/>
            <person name="Kaya A."/>
            <person name="Stamford J."/>
            <person name="Hyman A.A."/>
        </authorList>
    </citation>
    <scope>FUNCTION</scope>
    <scope>DISRUPTION PHENOTYPE</scope>
    <source>
        <strain>Bristol N2</strain>
    </source>
</reference>
<reference key="15">
    <citation type="journal article" date="2006" name="Mol. Biol. Cell">
        <title>LET-711, the Caenorhabditis elegans NOT1 ortholog, is required for spindle positioning and regulation of microtubule length in embryos.</title>
        <authorList>
            <person name="DeBella L.R."/>
            <person name="Hayashi A."/>
            <person name="Rose L.S."/>
        </authorList>
    </citation>
    <scope>FUNCTION</scope>
    <scope>SUBCELLULAR LOCATION</scope>
    <scope>DISRUPTION PHENOTYPE</scope>
</reference>
<reference evidence="20" key="16">
    <citation type="journal article" date="2007" name="J. Cell Sci.">
        <title>ZYG-9, TAC-1 and ZYG-8 together ensure correct microtubule function throughout the cell cycle of C. elegans embryos.</title>
        <authorList>
            <person name="Bellanger J.M."/>
            <person name="Carter J.C."/>
            <person name="Phillips J.B."/>
            <person name="Canard C."/>
            <person name="Bowerman B."/>
            <person name="Gonczy P."/>
        </authorList>
    </citation>
    <scope>FUNCTION</scope>
    <scope>SUBCELLULAR LOCATION</scope>
    <scope>DEVELOPMENTAL STAGE</scope>
    <scope>DISRUPTION PHENOTYPE</scope>
    <scope>MUTAGENESIS OF GLY-203; GLY-488; ILE-862 AND GLU-1317</scope>
    <source>
        <strain>Bristol N2</strain>
    </source>
</reference>
<reference evidence="20" key="17">
    <citation type="journal article" date="2007" name="Structure">
        <title>Crystal structure of a TOG domain: conserved features of XMAP215/Dis1-family TOG domains and implications for tubulin binding.</title>
        <authorList>
            <person name="Al-Bassam J."/>
            <person name="Larsen N.A."/>
            <person name="Hyman A.A."/>
            <person name="Harrison S.C."/>
        </authorList>
    </citation>
    <scope>X-RAY CRYSTALLOGRAPHY (1.90 ANGSTROMS) OF 602-867</scope>
    <scope>TOG DOMAIN</scope>
</reference>
<accession>G5EEM5</accession>
<protein>
    <recommendedName>
        <fullName evidence="19">Zygote defective protein 9</fullName>
    </recommendedName>
</protein>
<proteinExistence type="evidence at protein level"/>
<organism>
    <name type="scientific">Caenorhabditis elegans</name>
    <dbReference type="NCBI Taxonomy" id="6239"/>
    <lineage>
        <taxon>Eukaryota</taxon>
        <taxon>Metazoa</taxon>
        <taxon>Ecdysozoa</taxon>
        <taxon>Nematoda</taxon>
        <taxon>Chromadorea</taxon>
        <taxon>Rhabditida</taxon>
        <taxon>Rhabditina</taxon>
        <taxon>Rhabditomorpha</taxon>
        <taxon>Rhabditoidea</taxon>
        <taxon>Rhabditidae</taxon>
        <taxon>Peloderinae</taxon>
        <taxon>Caenorhabditis</taxon>
    </lineage>
</organism>